<sequence length="10" mass="1155">ADREPNHFVA</sequence>
<protein>
    <recommendedName>
        <fullName>17 kDa cell wall protein</fullName>
    </recommendedName>
</protein>
<name>CWP19_ARATH</name>
<dbReference type="GO" id="GO:0005576">
    <property type="term" value="C:extracellular region"/>
    <property type="evidence" value="ECO:0007669"/>
    <property type="project" value="UniProtKB-KW"/>
</dbReference>
<keyword id="KW-0134">Cell wall</keyword>
<keyword id="KW-0903">Direct protein sequencing</keyword>
<keyword id="KW-0964">Secreted</keyword>
<accession>P80840</accession>
<reference evidence="3" key="1">
    <citation type="journal article" date="1997" name="J. Biol. Chem.">
        <title>Differential extraction and protein sequencing reveals major differences in patterns of primary cell wall proteins from plants.</title>
        <authorList>
            <person name="Robertson D."/>
            <person name="Mitchell G.P."/>
            <person name="Gilroy J.S."/>
            <person name="Gerrish C."/>
            <person name="Bolwell G.P."/>
            <person name="Slabas A.R."/>
        </authorList>
    </citation>
    <scope>PROTEIN SEQUENCE</scope>
    <scope>SUBCELLULAR LOCATION</scope>
    <source>
        <strain>cv. Landsberg erecta</strain>
    </source>
</reference>
<evidence type="ECO:0000269" key="1">
    <source>
    </source>
</evidence>
<evidence type="ECO:0000303" key="2">
    <source>
    </source>
</evidence>
<evidence type="ECO:0000305" key="3"/>
<comment type="subcellular location">
    <subcellularLocation>
        <location evidence="1">Secreted</location>
        <location evidence="1">Cell wall</location>
    </subcellularLocation>
</comment>
<organism>
    <name type="scientific">Arabidopsis thaliana</name>
    <name type="common">Mouse-ear cress</name>
    <dbReference type="NCBI Taxonomy" id="3702"/>
    <lineage>
        <taxon>Eukaryota</taxon>
        <taxon>Viridiplantae</taxon>
        <taxon>Streptophyta</taxon>
        <taxon>Embryophyta</taxon>
        <taxon>Tracheophyta</taxon>
        <taxon>Spermatophyta</taxon>
        <taxon>Magnoliopsida</taxon>
        <taxon>eudicotyledons</taxon>
        <taxon>Gunneridae</taxon>
        <taxon>Pentapetalae</taxon>
        <taxon>rosids</taxon>
        <taxon>malvids</taxon>
        <taxon>Brassicales</taxon>
        <taxon>Brassicaceae</taxon>
        <taxon>Camelineae</taxon>
        <taxon>Arabidopsis</taxon>
    </lineage>
</organism>
<feature type="chain" id="PRO_0000079687" description="17 kDa cell wall protein">
    <location>
        <begin position="1"/>
        <end position="10" status="greater than"/>
    </location>
</feature>
<feature type="non-terminal residue" evidence="2">
    <location>
        <position position="10"/>
    </location>
</feature>
<proteinExistence type="evidence at protein level"/>